<sequence>MAAATGTRKKKTPRPGQWKLWLLYTAGFVPAVWTFYLGATGQLGADPVKTFEHLLGLWALRFLILTLLVTPMRDLTGITLLRYRRALGLLAFYYALMHFTTYMVLDQGLNLSAIITDIVRRPFITIGMISLALLVPLALTSNNWSIRKLGRRWSSLHKLVYIAIAGSAVHFLMSVKSWPAEPVIYAAIVAALLLWRLARPYLRTRKPALRPRGEAIALRK</sequence>
<accession>Q8YD73</accession>
<gene>
    <name evidence="1" type="primary">msrQ</name>
    <name type="ordered locus">BMEII0304</name>
</gene>
<dbReference type="EMBL" id="AE008918">
    <property type="protein sequence ID" value="AAL53546.1"/>
    <property type="molecule type" value="Genomic_DNA"/>
</dbReference>
<dbReference type="PIR" id="AG3547">
    <property type="entry name" value="AG3547"/>
</dbReference>
<dbReference type="RefSeq" id="WP_004682401.1">
    <property type="nucleotide sequence ID" value="NZ_GG703779.1"/>
</dbReference>
<dbReference type="SMR" id="Q8YD73"/>
<dbReference type="GeneID" id="29595626"/>
<dbReference type="KEGG" id="bme:BMEII0304"/>
<dbReference type="KEGG" id="bmel:DK63_2936"/>
<dbReference type="PATRIC" id="fig|224914.52.peg.3081"/>
<dbReference type="eggNOG" id="COG2717">
    <property type="taxonomic scope" value="Bacteria"/>
</dbReference>
<dbReference type="PhylomeDB" id="Q8YD73"/>
<dbReference type="Proteomes" id="UP000000419">
    <property type="component" value="Chromosome II"/>
</dbReference>
<dbReference type="GO" id="GO:0005886">
    <property type="term" value="C:plasma membrane"/>
    <property type="evidence" value="ECO:0007669"/>
    <property type="project" value="UniProtKB-SubCell"/>
</dbReference>
<dbReference type="GO" id="GO:0009055">
    <property type="term" value="F:electron transfer activity"/>
    <property type="evidence" value="ECO:0007669"/>
    <property type="project" value="UniProtKB-UniRule"/>
</dbReference>
<dbReference type="GO" id="GO:0010181">
    <property type="term" value="F:FMN binding"/>
    <property type="evidence" value="ECO:0007669"/>
    <property type="project" value="UniProtKB-UniRule"/>
</dbReference>
<dbReference type="GO" id="GO:0020037">
    <property type="term" value="F:heme binding"/>
    <property type="evidence" value="ECO:0007669"/>
    <property type="project" value="UniProtKB-UniRule"/>
</dbReference>
<dbReference type="GO" id="GO:0046872">
    <property type="term" value="F:metal ion binding"/>
    <property type="evidence" value="ECO:0007669"/>
    <property type="project" value="UniProtKB-KW"/>
</dbReference>
<dbReference type="GO" id="GO:0016679">
    <property type="term" value="F:oxidoreductase activity, acting on diphenols and related substances as donors"/>
    <property type="evidence" value="ECO:0007669"/>
    <property type="project" value="TreeGrafter"/>
</dbReference>
<dbReference type="GO" id="GO:0030091">
    <property type="term" value="P:protein repair"/>
    <property type="evidence" value="ECO:0007669"/>
    <property type="project" value="UniProtKB-UniRule"/>
</dbReference>
<dbReference type="HAMAP" id="MF_01207">
    <property type="entry name" value="MsrQ"/>
    <property type="match status" value="1"/>
</dbReference>
<dbReference type="InterPro" id="IPR013130">
    <property type="entry name" value="Fe3_Rdtase_TM_dom"/>
</dbReference>
<dbReference type="InterPro" id="IPR022837">
    <property type="entry name" value="MsrQ-like"/>
</dbReference>
<dbReference type="NCBIfam" id="NF003833">
    <property type="entry name" value="PRK05419.1-5"/>
    <property type="match status" value="1"/>
</dbReference>
<dbReference type="PANTHER" id="PTHR36964">
    <property type="entry name" value="PROTEIN-METHIONINE-SULFOXIDE REDUCTASE HEME-BINDING SUBUNIT MSRQ"/>
    <property type="match status" value="1"/>
</dbReference>
<dbReference type="PANTHER" id="PTHR36964:SF1">
    <property type="entry name" value="PROTEIN-METHIONINE-SULFOXIDE REDUCTASE HEME-BINDING SUBUNIT MSRQ"/>
    <property type="match status" value="1"/>
</dbReference>
<dbReference type="Pfam" id="PF01794">
    <property type="entry name" value="Ferric_reduct"/>
    <property type="match status" value="1"/>
</dbReference>
<name>MSRQ_BRUME</name>
<organism>
    <name type="scientific">Brucella melitensis biotype 1 (strain ATCC 23456 / CCUG 17765 / NCTC 10094 / 16M)</name>
    <dbReference type="NCBI Taxonomy" id="224914"/>
    <lineage>
        <taxon>Bacteria</taxon>
        <taxon>Pseudomonadati</taxon>
        <taxon>Pseudomonadota</taxon>
        <taxon>Alphaproteobacteria</taxon>
        <taxon>Hyphomicrobiales</taxon>
        <taxon>Brucellaceae</taxon>
        <taxon>Brucella/Ochrobactrum group</taxon>
        <taxon>Brucella</taxon>
    </lineage>
</organism>
<comment type="function">
    <text evidence="1">Part of the MsrPQ system that repairs oxidized periplasmic proteins containing methionine sulfoxide residues (Met-O), using respiratory chain electrons. Thus protects these proteins from oxidative-stress damage caused by reactive species of oxygen and chlorine generated by the host defense mechanisms. MsrPQ is essential for the maintenance of envelope integrity under bleach stress, rescuing a wide series of structurally unrelated periplasmic proteins from methionine oxidation. MsrQ provides electrons for reduction to the reductase catalytic subunit MsrP, using the quinone pool of the respiratory chain.</text>
</comment>
<comment type="cofactor">
    <cofactor evidence="1">
        <name>FMN</name>
        <dbReference type="ChEBI" id="CHEBI:58210"/>
    </cofactor>
    <text evidence="1">Binds 1 FMN per subunit.</text>
</comment>
<comment type="cofactor">
    <cofactor evidence="1">
        <name>heme b</name>
        <dbReference type="ChEBI" id="CHEBI:60344"/>
    </cofactor>
    <text evidence="1">Binds 1 heme b (iron(II)-protoporphyrin IX) group per subunit.</text>
</comment>
<comment type="subunit">
    <text evidence="1">Heterodimer of a catalytic subunit (MsrP) and a heme-binding subunit (MsrQ).</text>
</comment>
<comment type="subcellular location">
    <subcellularLocation>
        <location evidence="1">Cell inner membrane</location>
        <topology evidence="1">Multi-pass membrane protein</topology>
    </subcellularLocation>
</comment>
<comment type="similarity">
    <text evidence="1">Belongs to the MsrQ family.</text>
</comment>
<proteinExistence type="inferred from homology"/>
<evidence type="ECO:0000255" key="1">
    <source>
        <dbReference type="HAMAP-Rule" id="MF_01207"/>
    </source>
</evidence>
<reference key="1">
    <citation type="journal article" date="2002" name="Proc. Natl. Acad. Sci. U.S.A.">
        <title>The genome sequence of the facultative intracellular pathogen Brucella melitensis.</title>
        <authorList>
            <person name="DelVecchio V.G."/>
            <person name="Kapatral V."/>
            <person name="Redkar R.J."/>
            <person name="Patra G."/>
            <person name="Mujer C."/>
            <person name="Los T."/>
            <person name="Ivanova N."/>
            <person name="Anderson I."/>
            <person name="Bhattacharyya A."/>
            <person name="Lykidis A."/>
            <person name="Reznik G."/>
            <person name="Jablonski L."/>
            <person name="Larsen N."/>
            <person name="D'Souza M."/>
            <person name="Bernal A."/>
            <person name="Mazur M."/>
            <person name="Goltsman E."/>
            <person name="Selkov E."/>
            <person name="Elzer P.H."/>
            <person name="Hagius S."/>
            <person name="O'Callaghan D."/>
            <person name="Letesson J.-J."/>
            <person name="Haselkorn R."/>
            <person name="Kyrpides N.C."/>
            <person name="Overbeek R."/>
        </authorList>
    </citation>
    <scope>NUCLEOTIDE SEQUENCE [LARGE SCALE GENOMIC DNA]</scope>
    <source>
        <strain>ATCC 23456 / CCUG 17765 / NCTC 10094 / 16M</strain>
    </source>
</reference>
<protein>
    <recommendedName>
        <fullName evidence="1">Protein-methionine-sulfoxide reductase heme-binding subunit MsrQ</fullName>
    </recommendedName>
    <alternativeName>
        <fullName evidence="1">Flavocytochrome MsrQ</fullName>
    </alternativeName>
</protein>
<keyword id="KW-0997">Cell inner membrane</keyword>
<keyword id="KW-1003">Cell membrane</keyword>
<keyword id="KW-0249">Electron transport</keyword>
<keyword id="KW-0285">Flavoprotein</keyword>
<keyword id="KW-0288">FMN</keyword>
<keyword id="KW-0349">Heme</keyword>
<keyword id="KW-0408">Iron</keyword>
<keyword id="KW-0472">Membrane</keyword>
<keyword id="KW-0479">Metal-binding</keyword>
<keyword id="KW-0812">Transmembrane</keyword>
<keyword id="KW-1133">Transmembrane helix</keyword>
<keyword id="KW-0813">Transport</keyword>
<feature type="chain" id="PRO_0000091570" description="Protein-methionine-sulfoxide reductase heme-binding subunit MsrQ">
    <location>
        <begin position="1"/>
        <end position="220"/>
    </location>
</feature>
<feature type="transmembrane region" description="Helical" evidence="1">
    <location>
        <begin position="20"/>
        <end position="40"/>
    </location>
</feature>
<feature type="transmembrane region" description="Helical" evidence="1">
    <location>
        <begin position="51"/>
        <end position="71"/>
    </location>
</feature>
<feature type="transmembrane region" description="Helical" evidence="1">
    <location>
        <begin position="86"/>
        <end position="106"/>
    </location>
</feature>
<feature type="transmembrane region" description="Helical" evidence="1">
    <location>
        <begin position="122"/>
        <end position="142"/>
    </location>
</feature>
<feature type="transmembrane region" description="Helical" evidence="1">
    <location>
        <begin position="153"/>
        <end position="173"/>
    </location>
</feature>
<feature type="transmembrane region" description="Helical" evidence="1">
    <location>
        <begin position="175"/>
        <end position="195"/>
    </location>
</feature>